<comment type="function">
    <text evidence="1">Involved in iron-sulfur (Fe-S) cluster assembly. May act as a regulator of Fe-S biogenesis.</text>
</comment>
<comment type="similarity">
    <text evidence="1">Belongs to the frataxin family.</text>
</comment>
<reference key="1">
    <citation type="journal article" date="2009" name="PLoS Genet.">
        <title>Organised genome dynamics in the Escherichia coli species results in highly diverse adaptive paths.</title>
        <authorList>
            <person name="Touchon M."/>
            <person name="Hoede C."/>
            <person name="Tenaillon O."/>
            <person name="Barbe V."/>
            <person name="Baeriswyl S."/>
            <person name="Bidet P."/>
            <person name="Bingen E."/>
            <person name="Bonacorsi S."/>
            <person name="Bouchier C."/>
            <person name="Bouvet O."/>
            <person name="Calteau A."/>
            <person name="Chiapello H."/>
            <person name="Clermont O."/>
            <person name="Cruveiller S."/>
            <person name="Danchin A."/>
            <person name="Diard M."/>
            <person name="Dossat C."/>
            <person name="Karoui M.E."/>
            <person name="Frapy E."/>
            <person name="Garry L."/>
            <person name="Ghigo J.M."/>
            <person name="Gilles A.M."/>
            <person name="Johnson J."/>
            <person name="Le Bouguenec C."/>
            <person name="Lescat M."/>
            <person name="Mangenot S."/>
            <person name="Martinez-Jehanne V."/>
            <person name="Matic I."/>
            <person name="Nassif X."/>
            <person name="Oztas S."/>
            <person name="Petit M.A."/>
            <person name="Pichon C."/>
            <person name="Rouy Z."/>
            <person name="Ruf C.S."/>
            <person name="Schneider D."/>
            <person name="Tourret J."/>
            <person name="Vacherie B."/>
            <person name="Vallenet D."/>
            <person name="Medigue C."/>
            <person name="Rocha E.P.C."/>
            <person name="Denamur E."/>
        </authorList>
    </citation>
    <scope>NUCLEOTIDE SEQUENCE [LARGE SCALE GENOMIC DNA]</scope>
    <source>
        <strain>UMN026 / ExPEC</strain>
    </source>
</reference>
<sequence length="106" mass="12231">MNDSEFHRLADQLWLTIEERLDDWDGDSDIDCEINGGVLTITFENGSKIIINRQEPLHQVWLATKQGGYHFDLKGDEWICDRSGETFWDLLEQAATQQAGETVSFR</sequence>
<name>CYAY_ECOLU</name>
<evidence type="ECO:0000255" key="1">
    <source>
        <dbReference type="HAMAP-Rule" id="MF_00142"/>
    </source>
</evidence>
<protein>
    <recommendedName>
        <fullName evidence="1">Iron-sulfur cluster assembly protein CyaY</fullName>
    </recommendedName>
</protein>
<feature type="chain" id="PRO_1000190055" description="Iron-sulfur cluster assembly protein CyaY">
    <location>
        <begin position="1"/>
        <end position="106"/>
    </location>
</feature>
<dbReference type="EMBL" id="CU928163">
    <property type="protein sequence ID" value="CAR15464.1"/>
    <property type="molecule type" value="Genomic_DNA"/>
</dbReference>
<dbReference type="RefSeq" id="WP_000999947.1">
    <property type="nucleotide sequence ID" value="NC_011751.1"/>
</dbReference>
<dbReference type="RefSeq" id="YP_002414960.1">
    <property type="nucleotide sequence ID" value="NC_011751.1"/>
</dbReference>
<dbReference type="SMR" id="B7NFA9"/>
<dbReference type="STRING" id="585056.ECUMN_4331"/>
<dbReference type="GeneID" id="93778137"/>
<dbReference type="KEGG" id="eum:ECUMN_4331"/>
<dbReference type="PATRIC" id="fig|585056.7.peg.4496"/>
<dbReference type="HOGENOM" id="CLU_080880_3_0_6"/>
<dbReference type="Proteomes" id="UP000007097">
    <property type="component" value="Chromosome"/>
</dbReference>
<dbReference type="GO" id="GO:0005829">
    <property type="term" value="C:cytosol"/>
    <property type="evidence" value="ECO:0007669"/>
    <property type="project" value="TreeGrafter"/>
</dbReference>
<dbReference type="GO" id="GO:0008199">
    <property type="term" value="F:ferric iron binding"/>
    <property type="evidence" value="ECO:0007669"/>
    <property type="project" value="InterPro"/>
</dbReference>
<dbReference type="GO" id="GO:0008198">
    <property type="term" value="F:ferrous iron binding"/>
    <property type="evidence" value="ECO:0007669"/>
    <property type="project" value="TreeGrafter"/>
</dbReference>
<dbReference type="GO" id="GO:0016226">
    <property type="term" value="P:iron-sulfur cluster assembly"/>
    <property type="evidence" value="ECO:0007669"/>
    <property type="project" value="UniProtKB-UniRule"/>
</dbReference>
<dbReference type="CDD" id="cd00503">
    <property type="entry name" value="Frataxin"/>
    <property type="match status" value="1"/>
</dbReference>
<dbReference type="FunFam" id="3.30.920.10:FF:000001">
    <property type="entry name" value="Iron-sulfur cluster assembly protein CyaY"/>
    <property type="match status" value="1"/>
</dbReference>
<dbReference type="Gene3D" id="3.30.920.10">
    <property type="entry name" value="Frataxin/CyaY"/>
    <property type="match status" value="1"/>
</dbReference>
<dbReference type="HAMAP" id="MF_00142">
    <property type="entry name" value="CyaY"/>
    <property type="match status" value="1"/>
</dbReference>
<dbReference type="InterPro" id="IPR047584">
    <property type="entry name" value="CyaY"/>
</dbReference>
<dbReference type="InterPro" id="IPR002908">
    <property type="entry name" value="Frataxin/CyaY"/>
</dbReference>
<dbReference type="InterPro" id="IPR036524">
    <property type="entry name" value="Frataxin/CyaY_sf"/>
</dbReference>
<dbReference type="InterPro" id="IPR020895">
    <property type="entry name" value="Frataxin_CS"/>
</dbReference>
<dbReference type="NCBIfam" id="TIGR03421">
    <property type="entry name" value="FeS_CyaY"/>
    <property type="match status" value="1"/>
</dbReference>
<dbReference type="PANTHER" id="PTHR16821">
    <property type="entry name" value="FRATAXIN"/>
    <property type="match status" value="1"/>
</dbReference>
<dbReference type="PANTHER" id="PTHR16821:SF2">
    <property type="entry name" value="FRATAXIN, MITOCHONDRIAL"/>
    <property type="match status" value="1"/>
</dbReference>
<dbReference type="Pfam" id="PF01491">
    <property type="entry name" value="Frataxin_Cyay"/>
    <property type="match status" value="1"/>
</dbReference>
<dbReference type="SMART" id="SM01219">
    <property type="entry name" value="Frataxin_Cyay"/>
    <property type="match status" value="1"/>
</dbReference>
<dbReference type="SUPFAM" id="SSF55387">
    <property type="entry name" value="Frataxin/Nqo15-like"/>
    <property type="match status" value="1"/>
</dbReference>
<dbReference type="PROSITE" id="PS01344">
    <property type="entry name" value="FRATAXIN_1"/>
    <property type="match status" value="1"/>
</dbReference>
<dbReference type="PROSITE" id="PS50810">
    <property type="entry name" value="FRATAXIN_2"/>
    <property type="match status" value="1"/>
</dbReference>
<organism>
    <name type="scientific">Escherichia coli O17:K52:H18 (strain UMN026 / ExPEC)</name>
    <dbReference type="NCBI Taxonomy" id="585056"/>
    <lineage>
        <taxon>Bacteria</taxon>
        <taxon>Pseudomonadati</taxon>
        <taxon>Pseudomonadota</taxon>
        <taxon>Gammaproteobacteria</taxon>
        <taxon>Enterobacterales</taxon>
        <taxon>Enterobacteriaceae</taxon>
        <taxon>Escherichia</taxon>
    </lineage>
</organism>
<accession>B7NFA9</accession>
<proteinExistence type="inferred from homology"/>
<keyword id="KW-0408">Iron</keyword>
<keyword id="KW-0479">Metal-binding</keyword>
<gene>
    <name evidence="1" type="primary">cyaY</name>
    <name type="ordered locus">ECUMN_4331</name>
</gene>